<proteinExistence type="inferred from homology"/>
<sequence length="225" mass="25453">MYSIKTDHKLMPRERLIRLGPEKLSNQELLAILLRTGNKEKHVLELSAYLLSSLDSLADLKKFSLQELQRLSGIGKVKAIEIKAMLELADRIQIAGQAVAAPVLSSAQVAEKMMIELGDKQQEHLVAIYLDSQNKIIEEKTIFIGTVRKSIAEPREILYYACKNMATSLIVVHNHPSGLTKPSANDYHFTEKIKRSCDYLGLICLDHIIVSKHGYYSFREKSDLF</sequence>
<feature type="chain" id="PRO_1000089852" description="UPF0758 protein Sez_1052">
    <location>
        <begin position="1"/>
        <end position="225"/>
    </location>
</feature>
<feature type="domain" description="MPN" evidence="1">
    <location>
        <begin position="102"/>
        <end position="224"/>
    </location>
</feature>
<feature type="short sequence motif" description="JAMM motif" evidence="1">
    <location>
        <begin position="173"/>
        <end position="186"/>
    </location>
</feature>
<feature type="binding site" evidence="1">
    <location>
        <position position="173"/>
    </location>
    <ligand>
        <name>Zn(2+)</name>
        <dbReference type="ChEBI" id="CHEBI:29105"/>
        <note>catalytic</note>
    </ligand>
</feature>
<feature type="binding site" evidence="1">
    <location>
        <position position="175"/>
    </location>
    <ligand>
        <name>Zn(2+)</name>
        <dbReference type="ChEBI" id="CHEBI:29105"/>
        <note>catalytic</note>
    </ligand>
</feature>
<feature type="binding site" evidence="1">
    <location>
        <position position="186"/>
    </location>
    <ligand>
        <name>Zn(2+)</name>
        <dbReference type="ChEBI" id="CHEBI:29105"/>
        <note>catalytic</note>
    </ligand>
</feature>
<comment type="similarity">
    <text evidence="2">Belongs to the UPF0758 family.</text>
</comment>
<organism>
    <name type="scientific">Streptococcus equi subsp. zooepidemicus (strain MGCS10565)</name>
    <dbReference type="NCBI Taxonomy" id="552526"/>
    <lineage>
        <taxon>Bacteria</taxon>
        <taxon>Bacillati</taxon>
        <taxon>Bacillota</taxon>
        <taxon>Bacilli</taxon>
        <taxon>Lactobacillales</taxon>
        <taxon>Streptococcaceae</taxon>
        <taxon>Streptococcus</taxon>
    </lineage>
</organism>
<accession>B4U337</accession>
<evidence type="ECO:0000255" key="1">
    <source>
        <dbReference type="PROSITE-ProRule" id="PRU01182"/>
    </source>
</evidence>
<evidence type="ECO:0000305" key="2"/>
<name>Y1052_STREM</name>
<dbReference type="EMBL" id="CP001129">
    <property type="protein sequence ID" value="ACG62404.1"/>
    <property type="molecule type" value="Genomic_DNA"/>
</dbReference>
<dbReference type="SMR" id="B4U337"/>
<dbReference type="KEGG" id="sez:Sez_1052"/>
<dbReference type="HOGENOM" id="CLU_073529_0_2_9"/>
<dbReference type="Proteomes" id="UP000001873">
    <property type="component" value="Chromosome"/>
</dbReference>
<dbReference type="GO" id="GO:0046872">
    <property type="term" value="F:metal ion binding"/>
    <property type="evidence" value="ECO:0007669"/>
    <property type="project" value="UniProtKB-KW"/>
</dbReference>
<dbReference type="GO" id="GO:0008237">
    <property type="term" value="F:metallopeptidase activity"/>
    <property type="evidence" value="ECO:0007669"/>
    <property type="project" value="UniProtKB-KW"/>
</dbReference>
<dbReference type="GO" id="GO:0006508">
    <property type="term" value="P:proteolysis"/>
    <property type="evidence" value="ECO:0007669"/>
    <property type="project" value="UniProtKB-KW"/>
</dbReference>
<dbReference type="CDD" id="cd08071">
    <property type="entry name" value="MPN_DUF2466"/>
    <property type="match status" value="1"/>
</dbReference>
<dbReference type="Gene3D" id="3.40.140.10">
    <property type="entry name" value="Cytidine Deaminase, domain 2"/>
    <property type="match status" value="1"/>
</dbReference>
<dbReference type="InterPro" id="IPR037518">
    <property type="entry name" value="MPN"/>
</dbReference>
<dbReference type="InterPro" id="IPR025657">
    <property type="entry name" value="RadC_JAB"/>
</dbReference>
<dbReference type="InterPro" id="IPR010994">
    <property type="entry name" value="RuvA_2-like"/>
</dbReference>
<dbReference type="InterPro" id="IPR001405">
    <property type="entry name" value="UPF0758"/>
</dbReference>
<dbReference type="InterPro" id="IPR020891">
    <property type="entry name" value="UPF0758_CS"/>
</dbReference>
<dbReference type="InterPro" id="IPR046778">
    <property type="entry name" value="UPF0758_N"/>
</dbReference>
<dbReference type="NCBIfam" id="NF000642">
    <property type="entry name" value="PRK00024.1"/>
    <property type="match status" value="1"/>
</dbReference>
<dbReference type="NCBIfam" id="TIGR00608">
    <property type="entry name" value="radc"/>
    <property type="match status" value="1"/>
</dbReference>
<dbReference type="PANTHER" id="PTHR30471">
    <property type="entry name" value="DNA REPAIR PROTEIN RADC"/>
    <property type="match status" value="1"/>
</dbReference>
<dbReference type="PANTHER" id="PTHR30471:SF3">
    <property type="entry name" value="UPF0758 PROTEIN YEES-RELATED"/>
    <property type="match status" value="1"/>
</dbReference>
<dbReference type="Pfam" id="PF04002">
    <property type="entry name" value="RadC"/>
    <property type="match status" value="1"/>
</dbReference>
<dbReference type="Pfam" id="PF20582">
    <property type="entry name" value="UPF0758_N"/>
    <property type="match status" value="1"/>
</dbReference>
<dbReference type="SUPFAM" id="SSF47781">
    <property type="entry name" value="RuvA domain 2-like"/>
    <property type="match status" value="1"/>
</dbReference>
<dbReference type="PROSITE" id="PS50249">
    <property type="entry name" value="MPN"/>
    <property type="match status" value="1"/>
</dbReference>
<dbReference type="PROSITE" id="PS01302">
    <property type="entry name" value="UPF0758"/>
    <property type="match status" value="1"/>
</dbReference>
<reference key="1">
    <citation type="journal article" date="2008" name="PLoS ONE">
        <title>Genome sequence of a lancefield group C Streptococcus zooepidemicus strain causing epidemic nephritis: new information about an old disease.</title>
        <authorList>
            <person name="Beres S.B."/>
            <person name="Sesso R."/>
            <person name="Pinto S.W.L."/>
            <person name="Hoe N.P."/>
            <person name="Porcella S.F."/>
            <person name="Deleo F.R."/>
            <person name="Musser J.M."/>
        </authorList>
    </citation>
    <scope>NUCLEOTIDE SEQUENCE [LARGE SCALE GENOMIC DNA]</scope>
    <source>
        <strain>MGCS10565</strain>
    </source>
</reference>
<keyword id="KW-0378">Hydrolase</keyword>
<keyword id="KW-0479">Metal-binding</keyword>
<keyword id="KW-0482">Metalloprotease</keyword>
<keyword id="KW-0645">Protease</keyword>
<keyword id="KW-0862">Zinc</keyword>
<protein>
    <recommendedName>
        <fullName>UPF0758 protein Sez_1052</fullName>
    </recommendedName>
</protein>
<gene>
    <name type="ordered locus">Sez_1052</name>
</gene>